<name>RL29_BACMK</name>
<evidence type="ECO:0000255" key="1">
    <source>
        <dbReference type="HAMAP-Rule" id="MF_00374"/>
    </source>
</evidence>
<evidence type="ECO:0000305" key="2"/>
<comment type="similarity">
    <text evidence="1">Belongs to the universal ribosomal protein uL29 family.</text>
</comment>
<proteinExistence type="inferred from homology"/>
<feature type="chain" id="PRO_1000121732" description="Large ribosomal subunit protein uL29">
    <location>
        <begin position="1"/>
        <end position="66"/>
    </location>
</feature>
<dbReference type="EMBL" id="CP000903">
    <property type="protein sequence ID" value="ABY41382.1"/>
    <property type="molecule type" value="Genomic_DNA"/>
</dbReference>
<dbReference type="RefSeq" id="WP_002091523.1">
    <property type="nucleotide sequence ID" value="NZ_CAKMRX030000129.1"/>
</dbReference>
<dbReference type="SMR" id="A9VP85"/>
<dbReference type="GeneID" id="66264813"/>
<dbReference type="KEGG" id="bwe:BcerKBAB4_0113"/>
<dbReference type="eggNOG" id="COG0255">
    <property type="taxonomic scope" value="Bacteria"/>
</dbReference>
<dbReference type="HOGENOM" id="CLU_158491_5_2_9"/>
<dbReference type="Proteomes" id="UP000002154">
    <property type="component" value="Chromosome"/>
</dbReference>
<dbReference type="GO" id="GO:0022625">
    <property type="term" value="C:cytosolic large ribosomal subunit"/>
    <property type="evidence" value="ECO:0007669"/>
    <property type="project" value="TreeGrafter"/>
</dbReference>
<dbReference type="GO" id="GO:0003735">
    <property type="term" value="F:structural constituent of ribosome"/>
    <property type="evidence" value="ECO:0007669"/>
    <property type="project" value="InterPro"/>
</dbReference>
<dbReference type="GO" id="GO:0006412">
    <property type="term" value="P:translation"/>
    <property type="evidence" value="ECO:0007669"/>
    <property type="project" value="UniProtKB-UniRule"/>
</dbReference>
<dbReference type="CDD" id="cd00427">
    <property type="entry name" value="Ribosomal_L29_HIP"/>
    <property type="match status" value="1"/>
</dbReference>
<dbReference type="FunFam" id="1.10.287.310:FF:000001">
    <property type="entry name" value="50S ribosomal protein L29"/>
    <property type="match status" value="1"/>
</dbReference>
<dbReference type="Gene3D" id="1.10.287.310">
    <property type="match status" value="1"/>
</dbReference>
<dbReference type="HAMAP" id="MF_00374">
    <property type="entry name" value="Ribosomal_uL29"/>
    <property type="match status" value="1"/>
</dbReference>
<dbReference type="InterPro" id="IPR050063">
    <property type="entry name" value="Ribosomal_protein_uL29"/>
</dbReference>
<dbReference type="InterPro" id="IPR001854">
    <property type="entry name" value="Ribosomal_uL29"/>
</dbReference>
<dbReference type="InterPro" id="IPR018254">
    <property type="entry name" value="Ribosomal_uL29_CS"/>
</dbReference>
<dbReference type="InterPro" id="IPR036049">
    <property type="entry name" value="Ribosomal_uL29_sf"/>
</dbReference>
<dbReference type="NCBIfam" id="TIGR00012">
    <property type="entry name" value="L29"/>
    <property type="match status" value="1"/>
</dbReference>
<dbReference type="PANTHER" id="PTHR10916">
    <property type="entry name" value="60S RIBOSOMAL PROTEIN L35/50S RIBOSOMAL PROTEIN L29"/>
    <property type="match status" value="1"/>
</dbReference>
<dbReference type="PANTHER" id="PTHR10916:SF0">
    <property type="entry name" value="LARGE RIBOSOMAL SUBUNIT PROTEIN UL29C"/>
    <property type="match status" value="1"/>
</dbReference>
<dbReference type="Pfam" id="PF00831">
    <property type="entry name" value="Ribosomal_L29"/>
    <property type="match status" value="1"/>
</dbReference>
<dbReference type="SUPFAM" id="SSF46561">
    <property type="entry name" value="Ribosomal protein L29 (L29p)"/>
    <property type="match status" value="1"/>
</dbReference>
<dbReference type="PROSITE" id="PS00579">
    <property type="entry name" value="RIBOSOMAL_L29"/>
    <property type="match status" value="1"/>
</dbReference>
<protein>
    <recommendedName>
        <fullName evidence="1">Large ribosomal subunit protein uL29</fullName>
    </recommendedName>
    <alternativeName>
        <fullName evidence="2">50S ribosomal protein L29</fullName>
    </alternativeName>
</protein>
<sequence>MKTNDIRELTTAEIETKVKALKEELFNLRFQLATGQLENPTRIREVRKAIARMKTVVCEREIGINR</sequence>
<accession>A9VP85</accession>
<gene>
    <name evidence="1" type="primary">rpmC</name>
    <name type="ordered locus">BcerKBAB4_0113</name>
</gene>
<reference key="1">
    <citation type="journal article" date="2008" name="Chem. Biol. Interact.">
        <title>Extending the Bacillus cereus group genomics to putative food-borne pathogens of different toxicity.</title>
        <authorList>
            <person name="Lapidus A."/>
            <person name="Goltsman E."/>
            <person name="Auger S."/>
            <person name="Galleron N."/>
            <person name="Segurens B."/>
            <person name="Dossat C."/>
            <person name="Land M.L."/>
            <person name="Broussolle V."/>
            <person name="Brillard J."/>
            <person name="Guinebretiere M.-H."/>
            <person name="Sanchis V."/>
            <person name="Nguen-the C."/>
            <person name="Lereclus D."/>
            <person name="Richardson P."/>
            <person name="Wincker P."/>
            <person name="Weissenbach J."/>
            <person name="Ehrlich S.D."/>
            <person name="Sorokin A."/>
        </authorList>
    </citation>
    <scope>NUCLEOTIDE SEQUENCE [LARGE SCALE GENOMIC DNA]</scope>
    <source>
        <strain>KBAB4</strain>
    </source>
</reference>
<organism>
    <name type="scientific">Bacillus mycoides (strain KBAB4)</name>
    <name type="common">Bacillus weihenstephanensis</name>
    <dbReference type="NCBI Taxonomy" id="315730"/>
    <lineage>
        <taxon>Bacteria</taxon>
        <taxon>Bacillati</taxon>
        <taxon>Bacillota</taxon>
        <taxon>Bacilli</taxon>
        <taxon>Bacillales</taxon>
        <taxon>Bacillaceae</taxon>
        <taxon>Bacillus</taxon>
        <taxon>Bacillus cereus group</taxon>
    </lineage>
</organism>
<keyword id="KW-0687">Ribonucleoprotein</keyword>
<keyword id="KW-0689">Ribosomal protein</keyword>